<comment type="catalytic activity">
    <reaction evidence="1">
        <text>2-(N(omega)-L-arginino)succinate = fumarate + L-arginine</text>
        <dbReference type="Rhea" id="RHEA:24020"/>
        <dbReference type="ChEBI" id="CHEBI:29806"/>
        <dbReference type="ChEBI" id="CHEBI:32682"/>
        <dbReference type="ChEBI" id="CHEBI:57472"/>
        <dbReference type="EC" id="4.3.2.1"/>
    </reaction>
</comment>
<comment type="pathway">
    <text evidence="1">Amino-acid biosynthesis; L-arginine biosynthesis; L-arginine from L-ornithine and carbamoyl phosphate: step 3/3.</text>
</comment>
<comment type="subcellular location">
    <subcellularLocation>
        <location evidence="1">Cytoplasm</location>
    </subcellularLocation>
</comment>
<comment type="similarity">
    <text evidence="1">Belongs to the lyase 1 family. Argininosuccinate lyase subfamily.</text>
</comment>
<sequence length="462" mass="52559">MTKNHKLWGGRFESSLEKWVEEFGASISFDQKLAPYDMKASMAHVTMLGKTDIISQEEAGLIKDGLKILQDKYRAGQLTFSISNEDIHMNIESLLTAEIGEVAGKLHTARSRNDQVATDMHLYLKDKLQEMMKKLLHLRTTLVNLAENHIYTVMPGYTHLQHAQPISFGHHLMAYYNMFTRDTERLEFNMKHTDLSPLGAAALAGTTFPIDRHMTTRLLDFEKPYSNSLDAVSDRDFIIEFLSNASILMMHLSRFCEEIINWCSYEYQFITLSDTFSTGSSIMPQKKNPDMAELIRGKTGRVYGNLFSLLTVMKSLPLAYNKDLQEDKEGMFDSVETVSIAIEIMANMLETMTVNEHIMMTSTETDFSNATELADYLASKGIPFRKAHEIVGKLVLECSKNGSYLQDIPLKYYQEISELIENDIYEILTAKTAVKRRNSLGGTGFDQVKEQILLARKELKAE</sequence>
<name>ARLY_STRA3</name>
<feature type="chain" id="PRO_0000137829" description="Argininosuccinate lyase">
    <location>
        <begin position="1"/>
        <end position="462"/>
    </location>
</feature>
<gene>
    <name evidence="1" type="primary">argH</name>
    <name type="ordered locus">gbs0124</name>
</gene>
<dbReference type="EC" id="4.3.2.1" evidence="1"/>
<dbReference type="EMBL" id="AL766843">
    <property type="protein sequence ID" value="CAD45769.1"/>
    <property type="molecule type" value="Genomic_DNA"/>
</dbReference>
<dbReference type="RefSeq" id="WP_000164575.1">
    <property type="nucleotide sequence ID" value="NC_004368.1"/>
</dbReference>
<dbReference type="SMR" id="Q8E7N0"/>
<dbReference type="KEGG" id="san:gbs0124"/>
<dbReference type="eggNOG" id="COG0165">
    <property type="taxonomic scope" value="Bacteria"/>
</dbReference>
<dbReference type="HOGENOM" id="CLU_027272_2_3_9"/>
<dbReference type="UniPathway" id="UPA00068">
    <property type="reaction ID" value="UER00114"/>
</dbReference>
<dbReference type="Proteomes" id="UP000000823">
    <property type="component" value="Chromosome"/>
</dbReference>
<dbReference type="GO" id="GO:0005829">
    <property type="term" value="C:cytosol"/>
    <property type="evidence" value="ECO:0007669"/>
    <property type="project" value="TreeGrafter"/>
</dbReference>
<dbReference type="GO" id="GO:0004056">
    <property type="term" value="F:argininosuccinate lyase activity"/>
    <property type="evidence" value="ECO:0007669"/>
    <property type="project" value="UniProtKB-UniRule"/>
</dbReference>
<dbReference type="GO" id="GO:0042450">
    <property type="term" value="P:arginine biosynthetic process via ornithine"/>
    <property type="evidence" value="ECO:0007669"/>
    <property type="project" value="InterPro"/>
</dbReference>
<dbReference type="GO" id="GO:0006526">
    <property type="term" value="P:L-arginine biosynthetic process"/>
    <property type="evidence" value="ECO:0007669"/>
    <property type="project" value="UniProtKB-UniRule"/>
</dbReference>
<dbReference type="CDD" id="cd01359">
    <property type="entry name" value="Argininosuccinate_lyase"/>
    <property type="match status" value="1"/>
</dbReference>
<dbReference type="FunFam" id="1.10.275.10:FF:000002">
    <property type="entry name" value="Argininosuccinate lyase"/>
    <property type="match status" value="1"/>
</dbReference>
<dbReference type="FunFam" id="1.10.40.30:FF:000001">
    <property type="entry name" value="Argininosuccinate lyase"/>
    <property type="match status" value="1"/>
</dbReference>
<dbReference type="FunFam" id="1.20.200.10:FF:000002">
    <property type="entry name" value="Argininosuccinate lyase"/>
    <property type="match status" value="1"/>
</dbReference>
<dbReference type="Gene3D" id="1.10.40.30">
    <property type="entry name" value="Fumarase/aspartase (C-terminal domain)"/>
    <property type="match status" value="1"/>
</dbReference>
<dbReference type="Gene3D" id="1.20.200.10">
    <property type="entry name" value="Fumarase/aspartase (Central domain)"/>
    <property type="match status" value="1"/>
</dbReference>
<dbReference type="Gene3D" id="1.10.275.10">
    <property type="entry name" value="Fumarase/aspartase (N-terminal domain)"/>
    <property type="match status" value="1"/>
</dbReference>
<dbReference type="HAMAP" id="MF_00006">
    <property type="entry name" value="Arg_succ_lyase"/>
    <property type="match status" value="1"/>
</dbReference>
<dbReference type="InterPro" id="IPR029419">
    <property type="entry name" value="Arg_succ_lyase_C"/>
</dbReference>
<dbReference type="InterPro" id="IPR009049">
    <property type="entry name" value="Argininosuccinate_lyase"/>
</dbReference>
<dbReference type="InterPro" id="IPR024083">
    <property type="entry name" value="Fumarase/histidase_N"/>
</dbReference>
<dbReference type="InterPro" id="IPR020557">
    <property type="entry name" value="Fumarate_lyase_CS"/>
</dbReference>
<dbReference type="InterPro" id="IPR000362">
    <property type="entry name" value="Fumarate_lyase_fam"/>
</dbReference>
<dbReference type="InterPro" id="IPR022761">
    <property type="entry name" value="Fumarate_lyase_N"/>
</dbReference>
<dbReference type="InterPro" id="IPR008948">
    <property type="entry name" value="L-Aspartase-like"/>
</dbReference>
<dbReference type="NCBIfam" id="TIGR00838">
    <property type="entry name" value="argH"/>
    <property type="match status" value="1"/>
</dbReference>
<dbReference type="PANTHER" id="PTHR43814">
    <property type="entry name" value="ARGININOSUCCINATE LYASE"/>
    <property type="match status" value="1"/>
</dbReference>
<dbReference type="PANTHER" id="PTHR43814:SF1">
    <property type="entry name" value="ARGININOSUCCINATE LYASE"/>
    <property type="match status" value="1"/>
</dbReference>
<dbReference type="Pfam" id="PF14698">
    <property type="entry name" value="ASL_C2"/>
    <property type="match status" value="1"/>
</dbReference>
<dbReference type="Pfam" id="PF00206">
    <property type="entry name" value="Lyase_1"/>
    <property type="match status" value="1"/>
</dbReference>
<dbReference type="PRINTS" id="PR00145">
    <property type="entry name" value="ARGSUCLYASE"/>
</dbReference>
<dbReference type="PRINTS" id="PR00149">
    <property type="entry name" value="FUMRATELYASE"/>
</dbReference>
<dbReference type="SUPFAM" id="SSF48557">
    <property type="entry name" value="L-aspartase-like"/>
    <property type="match status" value="1"/>
</dbReference>
<dbReference type="PROSITE" id="PS00163">
    <property type="entry name" value="FUMARATE_LYASES"/>
    <property type="match status" value="1"/>
</dbReference>
<reference key="1">
    <citation type="journal article" date="2002" name="Mol. Microbiol.">
        <title>Genome sequence of Streptococcus agalactiae, a pathogen causing invasive neonatal disease.</title>
        <authorList>
            <person name="Glaser P."/>
            <person name="Rusniok C."/>
            <person name="Buchrieser C."/>
            <person name="Chevalier F."/>
            <person name="Frangeul L."/>
            <person name="Msadek T."/>
            <person name="Zouine M."/>
            <person name="Couve E."/>
            <person name="Lalioui L."/>
            <person name="Poyart C."/>
            <person name="Trieu-Cuot P."/>
            <person name="Kunst F."/>
        </authorList>
    </citation>
    <scope>NUCLEOTIDE SEQUENCE [LARGE SCALE GENOMIC DNA]</scope>
    <source>
        <strain>NEM316</strain>
    </source>
</reference>
<protein>
    <recommendedName>
        <fullName evidence="1">Argininosuccinate lyase</fullName>
        <shortName evidence="1">ASAL</shortName>
        <ecNumber evidence="1">4.3.2.1</ecNumber>
    </recommendedName>
    <alternativeName>
        <fullName evidence="1">Arginosuccinase</fullName>
    </alternativeName>
</protein>
<accession>Q8E7N0</accession>
<organism>
    <name type="scientific">Streptococcus agalactiae serotype III (strain NEM316)</name>
    <dbReference type="NCBI Taxonomy" id="211110"/>
    <lineage>
        <taxon>Bacteria</taxon>
        <taxon>Bacillati</taxon>
        <taxon>Bacillota</taxon>
        <taxon>Bacilli</taxon>
        <taxon>Lactobacillales</taxon>
        <taxon>Streptococcaceae</taxon>
        <taxon>Streptococcus</taxon>
    </lineage>
</organism>
<evidence type="ECO:0000255" key="1">
    <source>
        <dbReference type="HAMAP-Rule" id="MF_00006"/>
    </source>
</evidence>
<proteinExistence type="inferred from homology"/>
<keyword id="KW-0028">Amino-acid biosynthesis</keyword>
<keyword id="KW-0055">Arginine biosynthesis</keyword>
<keyword id="KW-0963">Cytoplasm</keyword>
<keyword id="KW-0456">Lyase</keyword>